<name>T4S19_HUMAN</name>
<reference key="1">
    <citation type="submission" date="1999-10" db="EMBL/GenBank/DDBJ databases">
        <title>Differential screening of human osteoclast maturation associated genes.</title>
        <authorList>
            <person name="Yamane S."/>
            <person name="Toyosaki-Maeda T."/>
            <person name="Tsuruta Y."/>
            <person name="Suzuki R."/>
            <person name="Ochi T."/>
        </authorList>
    </citation>
    <scope>NUCLEOTIDE SEQUENCE [MRNA] (ISOFORM 1)</scope>
    <scope>VARIANT PRO-8</scope>
    <source>
        <tissue>Osteoclast</tissue>
    </source>
</reference>
<reference key="2">
    <citation type="journal article" date="2006" name="Nature">
        <title>The DNA sequence, annotation and analysis of human chromosome 3.</title>
        <authorList>
            <person name="Muzny D.M."/>
            <person name="Scherer S.E."/>
            <person name="Kaul R."/>
            <person name="Wang J."/>
            <person name="Yu J."/>
            <person name="Sudbrak R."/>
            <person name="Buhay C.J."/>
            <person name="Chen R."/>
            <person name="Cree A."/>
            <person name="Ding Y."/>
            <person name="Dugan-Rocha S."/>
            <person name="Gill R."/>
            <person name="Gunaratne P."/>
            <person name="Harris R.A."/>
            <person name="Hawes A.C."/>
            <person name="Hernandez J."/>
            <person name="Hodgson A.V."/>
            <person name="Hume J."/>
            <person name="Jackson A."/>
            <person name="Khan Z.M."/>
            <person name="Kovar-Smith C."/>
            <person name="Lewis L.R."/>
            <person name="Lozado R.J."/>
            <person name="Metzker M.L."/>
            <person name="Milosavljevic A."/>
            <person name="Miner G.R."/>
            <person name="Morgan M.B."/>
            <person name="Nazareth L.V."/>
            <person name="Scott G."/>
            <person name="Sodergren E."/>
            <person name="Song X.-Z."/>
            <person name="Steffen D."/>
            <person name="Wei S."/>
            <person name="Wheeler D.A."/>
            <person name="Wright M.W."/>
            <person name="Worley K.C."/>
            <person name="Yuan Y."/>
            <person name="Zhang Z."/>
            <person name="Adams C.Q."/>
            <person name="Ansari-Lari M.A."/>
            <person name="Ayele M."/>
            <person name="Brown M.J."/>
            <person name="Chen G."/>
            <person name="Chen Z."/>
            <person name="Clendenning J."/>
            <person name="Clerc-Blankenburg K.P."/>
            <person name="Chen R."/>
            <person name="Chen Z."/>
            <person name="Davis C."/>
            <person name="Delgado O."/>
            <person name="Dinh H.H."/>
            <person name="Dong W."/>
            <person name="Draper H."/>
            <person name="Ernst S."/>
            <person name="Fu G."/>
            <person name="Gonzalez-Garay M.L."/>
            <person name="Garcia D.K."/>
            <person name="Gillett W."/>
            <person name="Gu J."/>
            <person name="Hao B."/>
            <person name="Haugen E."/>
            <person name="Havlak P."/>
            <person name="He X."/>
            <person name="Hennig S."/>
            <person name="Hu S."/>
            <person name="Huang W."/>
            <person name="Jackson L.R."/>
            <person name="Jacob L.S."/>
            <person name="Kelly S.H."/>
            <person name="Kube M."/>
            <person name="Levy R."/>
            <person name="Li Z."/>
            <person name="Liu B."/>
            <person name="Liu J."/>
            <person name="Liu W."/>
            <person name="Lu J."/>
            <person name="Maheshwari M."/>
            <person name="Nguyen B.-V."/>
            <person name="Okwuonu G.O."/>
            <person name="Palmeiri A."/>
            <person name="Pasternak S."/>
            <person name="Perez L.M."/>
            <person name="Phelps K.A."/>
            <person name="Plopper F.J."/>
            <person name="Qiang B."/>
            <person name="Raymond C."/>
            <person name="Rodriguez R."/>
            <person name="Saenphimmachak C."/>
            <person name="Santibanez J."/>
            <person name="Shen H."/>
            <person name="Shen Y."/>
            <person name="Subramanian S."/>
            <person name="Tabor P.E."/>
            <person name="Verduzco D."/>
            <person name="Waldron L."/>
            <person name="Wang J."/>
            <person name="Wang J."/>
            <person name="Wang Q."/>
            <person name="Williams G.A."/>
            <person name="Wong G.K.-S."/>
            <person name="Yao Z."/>
            <person name="Zhang J."/>
            <person name="Zhang X."/>
            <person name="Zhao G."/>
            <person name="Zhou J."/>
            <person name="Zhou Y."/>
            <person name="Nelson D."/>
            <person name="Lehrach H."/>
            <person name="Reinhardt R."/>
            <person name="Naylor S.L."/>
            <person name="Yang H."/>
            <person name="Olson M."/>
            <person name="Weinstock G."/>
            <person name="Gibbs R.A."/>
        </authorList>
    </citation>
    <scope>NUCLEOTIDE SEQUENCE [LARGE SCALE GENOMIC DNA]</scope>
</reference>
<reference key="3">
    <citation type="submission" date="2005-09" db="EMBL/GenBank/DDBJ databases">
        <authorList>
            <person name="Mural R.J."/>
            <person name="Istrail S."/>
            <person name="Sutton G.G."/>
            <person name="Florea L."/>
            <person name="Halpern A.L."/>
            <person name="Mobarry C.M."/>
            <person name="Lippert R."/>
            <person name="Walenz B."/>
            <person name="Shatkay H."/>
            <person name="Dew I."/>
            <person name="Miller J.R."/>
            <person name="Flanigan M.J."/>
            <person name="Edwards N.J."/>
            <person name="Bolanos R."/>
            <person name="Fasulo D."/>
            <person name="Halldorsson B.V."/>
            <person name="Hannenhalli S."/>
            <person name="Turner R."/>
            <person name="Yooseph S."/>
            <person name="Lu F."/>
            <person name="Nusskern D.R."/>
            <person name="Shue B.C."/>
            <person name="Zheng X.H."/>
            <person name="Zhong F."/>
            <person name="Delcher A.L."/>
            <person name="Huson D.H."/>
            <person name="Kravitz S.A."/>
            <person name="Mouchard L."/>
            <person name="Reinert K."/>
            <person name="Remington K.A."/>
            <person name="Clark A.G."/>
            <person name="Waterman M.S."/>
            <person name="Eichler E.E."/>
            <person name="Adams M.D."/>
            <person name="Hunkapiller M.W."/>
            <person name="Myers E.W."/>
            <person name="Venter J.C."/>
        </authorList>
    </citation>
    <scope>NUCLEOTIDE SEQUENCE [LARGE SCALE GENOMIC DNA]</scope>
</reference>
<reference key="4">
    <citation type="journal article" date="2004" name="Genome Res.">
        <title>The status, quality, and expansion of the NIH full-length cDNA project: the Mammalian Gene Collection (MGC).</title>
        <authorList>
            <consortium name="The MGC Project Team"/>
        </authorList>
    </citation>
    <scope>NUCLEOTIDE SEQUENCE [LARGE SCALE MRNA] (ISOFORMS 1 AND 2)</scope>
    <scope>VARIANT PRO-8</scope>
    <source>
        <tissue>Testis</tissue>
    </source>
</reference>
<reference key="5">
    <citation type="journal article" date="2020" name="Biochem. Biophys. Res. Commun.">
        <title>TM4SF19 aggravates LPS-induced attenuation of vascular endothelial cell adherens junctions by suppressing VE-cadherin expression.</title>
        <authorList>
            <person name="Ding L."/>
            <person name="Li L.M."/>
            <person name="Hu B."/>
            <person name="Wang J.L."/>
            <person name="Lu Y.B."/>
            <person name="Zhang R.Y."/>
            <person name="He X."/>
            <person name="Shi C."/>
            <person name="Wu L.M."/>
            <person name="Wu C.M."/>
            <person name="Yang B."/>
            <person name="Zheng L."/>
            <person name="Ping B.H."/>
            <person name="Hu Y.W."/>
            <person name="Wang Q."/>
        </authorList>
    </citation>
    <scope>INDUCTION BY LPS</scope>
</reference>
<reference key="6">
    <citation type="journal article" date="2024" name="Metabolism">
        <title>Tm4sf19 deficiency inhibits osteoclast multinucleation and prevents bone loss.</title>
        <authorList>
            <person name="Park S."/>
            <person name="Heo J.S."/>
            <person name="Mizuno S."/>
            <person name="Kim M."/>
            <person name="An H."/>
            <person name="Hong E."/>
            <person name="Kang M.G."/>
            <person name="Kim J."/>
            <person name="Yun R."/>
            <person name="Park H."/>
            <person name="Noh E.H."/>
            <person name="Lee M.J."/>
            <person name="Yoon K."/>
            <person name="Kim P."/>
            <person name="Son M."/>
            <person name="Pang K."/>
            <person name="Lee J."/>
            <person name="Park J."/>
            <person name="Ooshima A."/>
            <person name="Kim T.J."/>
            <person name="Park J.Y."/>
            <person name="Yang K.M."/>
            <person name="Myung S.J."/>
            <person name="Bae H."/>
            <person name="Lee K.M."/>
            <person name="Letterio J."/>
            <person name="Park S.H."/>
            <person name="Takahashi S."/>
            <person name="Kim S.J."/>
        </authorList>
    </citation>
    <scope>HOMODIMERIZATION</scope>
    <scope>INTERACTION WITH ITGAV AND ITGB3</scope>
</reference>
<reference key="7">
    <citation type="journal article" date="2024" name="Nat. Commun.">
        <title>TM4SF19-mediated control of lysosomal activity in macrophages contributes to obesity-induced inflammation and metabolic dysfunction.</title>
        <authorList>
            <person name="Choi C."/>
            <person name="Jeong Y.L."/>
            <person name="Park K.M."/>
            <person name="Kim M."/>
            <person name="Kim S."/>
            <person name="Jo H."/>
            <person name="Lee S."/>
            <person name="Kim H."/>
            <person name="Choi G."/>
            <person name="Choi Y.H."/>
            <person name="Seong J.K."/>
            <person name="Namgoong S."/>
            <person name="Chung Y."/>
            <person name="Jung Y.S."/>
            <person name="Granneman J.G."/>
            <person name="Hyun Y.M."/>
            <person name="Kim J.K."/>
            <person name="Lee Y.H."/>
        </authorList>
    </citation>
    <scope>TISSUE SPECIFICITY</scope>
</reference>
<proteinExistence type="evidence at protein level"/>
<keyword id="KW-0025">Alternative splicing</keyword>
<keyword id="KW-0966">Cell projection</keyword>
<keyword id="KW-0963">Cytoplasm</keyword>
<keyword id="KW-0206">Cytoskeleton</keyword>
<keyword id="KW-0325">Glycoprotein</keyword>
<keyword id="KW-0458">Lysosome</keyword>
<keyword id="KW-0472">Membrane</keyword>
<keyword id="KW-1185">Reference proteome</keyword>
<keyword id="KW-0812">Transmembrane</keyword>
<keyword id="KW-1133">Transmembrane helix</keyword>
<sequence length="209" mass="22433">MVSSPCTQASSRTCSRILGLSLGTAALFAAGANVALLLPNWDVTYLLRGLLGRHAMLGTGLWGGGLMVLTAAILISLMGWRYGCFSKSGLCRSVLTALLSGGLALLGALICFVTSGVALKDGPFCMFDVSSFNQTQAWKYGYPFKDLHSRNYLYDRSLWNSVCLEPSAAVVWHVSLFSALLCISLLQLLLVVVHVINSLLGLFCSLCEK</sequence>
<gene>
    <name type="primary">TM4SF19</name>
    <name type="synonym">OCTM4</name>
</gene>
<comment type="function">
    <text evidence="1">Negatively regulates vacuolar (H+)-ATPase (V-ATPase) activity by interacting with members of V-ATPase V0 complex and hence inhibiting V1-V0 complex assembly. Required for multinucleation during osteoclast differentiation.</text>
</comment>
<comment type="subunit">
    <text evidence="1 5">May form homodimers and homooligomers (PubMed:38016540). Interacts with integrins ITGAV and ITGB3 (PubMed:38016540). Interacts with components of members of the V0 complex of vacuolar(H+)-ATPase (V-ATPase), including ATP6V0B and ATP6V0D2; this interaction inhibits V1-V0 complex assembly (By similarity).</text>
</comment>
<comment type="interaction">
    <interactant intactId="EBI-6448756">
        <id>Q96DZ7</id>
    </interactant>
    <interactant intactId="EBI-348517">
        <id>O95870</id>
        <label>ABHD16A</label>
    </interactant>
    <organismsDiffer>false</organismsDiffer>
    <experiments>3</experiments>
</comment>
<comment type="interaction">
    <interactant intactId="EBI-6448756">
        <id>Q96DZ7</id>
    </interactant>
    <interactant intactId="EBI-3904417">
        <id>Q99437</id>
        <label>ATP6V0B</label>
    </interactant>
    <organismsDiffer>false</organismsDiffer>
    <experiments>3</experiments>
</comment>
<comment type="interaction">
    <interactant intactId="EBI-6448756">
        <id>Q96DZ7</id>
    </interactant>
    <interactant intactId="EBI-4402847">
        <id>Q12981</id>
        <label>BNIP1</label>
    </interactant>
    <organismsDiffer>false</organismsDiffer>
    <experiments>3</experiments>
</comment>
<comment type="interaction">
    <interactant intactId="EBI-6448756">
        <id>Q96DZ7</id>
    </interactant>
    <interactant intactId="EBI-12003442">
        <id>Q8WVX3-2</id>
        <label>C4orf3</label>
    </interactant>
    <organismsDiffer>false</organismsDiffer>
    <experiments>3</experiments>
</comment>
<comment type="interaction">
    <interactant intactId="EBI-6448756">
        <id>Q96DZ7</id>
    </interactant>
    <interactant intactId="EBI-9083477">
        <id>Q9P0B6</id>
        <label>CCDC167</label>
    </interactant>
    <organismsDiffer>false</organismsDiffer>
    <experiments>3</experiments>
</comment>
<comment type="interaction">
    <interactant intactId="EBI-6448756">
        <id>Q96DZ7</id>
    </interactant>
    <interactant intactId="EBI-7797864">
        <id>P11912</id>
        <label>CD79A</label>
    </interactant>
    <organismsDiffer>false</organismsDiffer>
    <experiments>3</experiments>
</comment>
<comment type="interaction">
    <interactant intactId="EBI-6448756">
        <id>Q96DZ7</id>
    </interactant>
    <interactant intactId="EBI-12019274">
        <id>Q4LDR2</id>
        <label>CTXN3</label>
    </interactant>
    <organismsDiffer>false</organismsDiffer>
    <experiments>3</experiments>
</comment>
<comment type="interaction">
    <interactant intactId="EBI-6448756">
        <id>Q96DZ7</id>
    </interactant>
    <interactant intactId="EBI-2680384">
        <id>Q9BQA9</id>
        <label>CYBC1</label>
    </interactant>
    <organismsDiffer>false</organismsDiffer>
    <experiments>3</experiments>
</comment>
<comment type="interaction">
    <interactant intactId="EBI-6448756">
        <id>Q96DZ7</id>
    </interactant>
    <interactant intactId="EBI-1752413">
        <id>P78329</id>
        <label>CYP4F2</label>
    </interactant>
    <organismsDiffer>false</organismsDiffer>
    <experiments>3</experiments>
</comment>
<comment type="interaction">
    <interactant intactId="EBI-6448756">
        <id>Q96DZ7</id>
    </interactant>
    <interactant intactId="EBI-711490">
        <id>Q9UKR5</id>
        <label>ERG28</label>
    </interactant>
    <organismsDiffer>false</organismsDiffer>
    <experiments>3</experiments>
</comment>
<comment type="interaction">
    <interactant intactId="EBI-6448756">
        <id>Q96DZ7</id>
    </interactant>
    <interactant intactId="EBI-18908258">
        <id>O00258</id>
        <label>GET1</label>
    </interactant>
    <organismsDiffer>false</organismsDiffer>
    <experiments>3</experiments>
</comment>
<comment type="interaction">
    <interactant intactId="EBI-6448756">
        <id>Q96DZ7</id>
    </interactant>
    <interactant intactId="EBI-11991950">
        <id>Q8WWP7</id>
        <label>GIMAP1</label>
    </interactant>
    <organismsDiffer>false</organismsDiffer>
    <experiments>3</experiments>
</comment>
<comment type="interaction">
    <interactant intactId="EBI-6448756">
        <id>Q96DZ7</id>
    </interactant>
    <interactant intactId="EBI-6166686">
        <id>Q96F15</id>
        <label>GIMAP5</label>
    </interactant>
    <organismsDiffer>false</organismsDiffer>
    <experiments>3</experiments>
</comment>
<comment type="interaction">
    <interactant intactId="EBI-6448756">
        <id>Q96DZ7</id>
    </interactant>
    <interactant intactId="EBI-4401517">
        <id>O14653</id>
        <label>GOSR2</label>
    </interactant>
    <organismsDiffer>false</organismsDiffer>
    <experiments>3</experiments>
</comment>
<comment type="interaction">
    <interactant intactId="EBI-6448756">
        <id>Q96DZ7</id>
    </interactant>
    <interactant intactId="EBI-13345167">
        <id>Q8TDT2</id>
        <label>GPR152</label>
    </interactant>
    <organismsDiffer>false</organismsDiffer>
    <experiments>3</experiments>
</comment>
<comment type="interaction">
    <interactant intactId="EBI-6448756">
        <id>Q96DZ7</id>
    </interactant>
    <interactant intactId="EBI-2806151">
        <id>P09601</id>
        <label>HMOX1</label>
    </interactant>
    <organismsDiffer>false</organismsDiffer>
    <experiments>3</experiments>
</comment>
<comment type="interaction">
    <interactant intactId="EBI-6448756">
        <id>Q96DZ7</id>
    </interactant>
    <interactant intactId="EBI-1246131">
        <id>O95167</id>
        <label>NDUFA3</label>
    </interactant>
    <organismsDiffer>false</organismsDiffer>
    <experiments>3</experiments>
</comment>
<comment type="interaction">
    <interactant intactId="EBI-6448756">
        <id>Q96DZ7</id>
    </interactant>
    <interactant intactId="EBI-12051377">
        <id>Q8N912</id>
        <label>NRAC</label>
    </interactant>
    <organismsDiffer>false</organismsDiffer>
    <experiments>3</experiments>
</comment>
<comment type="interaction">
    <interactant intactId="EBI-6448756">
        <id>Q96DZ7</id>
    </interactant>
    <interactant intactId="EBI-608347">
        <id>Q04941</id>
        <label>PLP2</label>
    </interactant>
    <organismsDiffer>false</organismsDiffer>
    <experiments>3</experiments>
</comment>
<comment type="interaction">
    <interactant intactId="EBI-6448756">
        <id>Q96DZ7</id>
    </interactant>
    <interactant intactId="EBI-2845982">
        <id>Q01453</id>
        <label>PMP22</label>
    </interactant>
    <organismsDiffer>false</organismsDiffer>
    <experiments>3</experiments>
</comment>
<comment type="interaction">
    <interactant intactId="EBI-6448756">
        <id>Q96DZ7</id>
    </interactant>
    <interactant intactId="EBI-1058865">
        <id>O75396</id>
        <label>SEC22B</label>
    </interactant>
    <organismsDiffer>false</organismsDiffer>
    <experiments>3</experiments>
</comment>
<comment type="interaction">
    <interactant intactId="EBI-6448756">
        <id>Q96DZ7</id>
    </interactant>
    <interactant intactId="EBI-749270">
        <id>Q8N6R1</id>
        <label>SERP2</label>
    </interactant>
    <organismsDiffer>false</organismsDiffer>
    <experiments>3</experiments>
</comment>
<comment type="interaction">
    <interactant intactId="EBI-6448756">
        <id>Q96DZ7</id>
    </interactant>
    <interactant intactId="EBI-12188413">
        <id>B2RUZ4</id>
        <label>SMIM1</label>
    </interactant>
    <organismsDiffer>false</organismsDiffer>
    <experiments>3</experiments>
</comment>
<comment type="interaction">
    <interactant intactId="EBI-6448756">
        <id>Q96DZ7</id>
    </interactant>
    <interactant intactId="EBI-3221827">
        <id>O15400</id>
        <label>STX7</label>
    </interactant>
    <organismsDiffer>false</organismsDiffer>
    <experiments>3</experiments>
</comment>
<comment type="interaction">
    <interactant intactId="EBI-6448756">
        <id>Q96DZ7</id>
    </interactant>
    <interactant intactId="EBI-13075176">
        <id>Q8N2H4</id>
        <label>SYS1</label>
    </interactant>
    <organismsDiffer>false</organismsDiffer>
    <experiments>3</experiments>
</comment>
<comment type="interaction">
    <interactant intactId="EBI-6448756">
        <id>Q96DZ7</id>
    </interactant>
    <interactant intactId="EBI-17684533">
        <id>Q9NRX6</id>
        <label>TMEM167B</label>
    </interactant>
    <organismsDiffer>false</organismsDiffer>
    <experiments>3</experiments>
</comment>
<comment type="interaction">
    <interactant intactId="EBI-6448756">
        <id>Q96DZ7</id>
    </interactant>
    <interactant intactId="EBI-11724423">
        <id>Q7Z7N9</id>
        <label>TMEM179B</label>
    </interactant>
    <organismsDiffer>false</organismsDiffer>
    <experiments>3</experiments>
</comment>
<comment type="interaction">
    <interactant intactId="EBI-6448756">
        <id>Q96DZ7</id>
    </interactant>
    <interactant intactId="EBI-10982110">
        <id>Q96Q45-2</id>
        <label>TMEM237</label>
    </interactant>
    <organismsDiffer>false</organismsDiffer>
    <experiments>3</experiments>
</comment>
<comment type="interaction">
    <interactant intactId="EBI-6448756">
        <id>Q96DZ7</id>
    </interactant>
    <interactant intactId="EBI-12038591">
        <id>Q69YG0</id>
        <label>TMEM42</label>
    </interactant>
    <organismsDiffer>false</organismsDiffer>
    <experiments>3</experiments>
</comment>
<comment type="interaction">
    <interactant intactId="EBI-6448756">
        <id>Q96DZ7</id>
    </interactant>
    <interactant intactId="EBI-12003468">
        <id>A0AVG3</id>
        <label>TSNARE1</label>
    </interactant>
    <organismsDiffer>false</organismsDiffer>
    <experiments>3</experiments>
</comment>
<comment type="interaction">
    <interactant intactId="EBI-6448756">
        <id>Q96DZ7</id>
    </interactant>
    <interactant intactId="EBI-988826">
        <id>Q9Y385</id>
        <label>UBE2J1</label>
    </interactant>
    <organismsDiffer>false</organismsDiffer>
    <experiments>3</experiments>
</comment>
<comment type="interaction">
    <interactant intactId="EBI-6448756">
        <id>Q96DZ7</id>
    </interactant>
    <interactant intactId="EBI-722343">
        <id>Q15836</id>
        <label>VAMP3</label>
    </interactant>
    <organismsDiffer>false</organismsDiffer>
    <experiments>3</experiments>
</comment>
<comment type="interaction">
    <interactant intactId="EBI-6448756">
        <id>Q96DZ7</id>
    </interactant>
    <interactant intactId="EBI-744953">
        <id>O75379</id>
        <label>VAMP4</label>
    </interactant>
    <organismsDiffer>false</organismsDiffer>
    <experiments>3</experiments>
</comment>
<comment type="interaction">
    <interactant intactId="EBI-6448756">
        <id>Q96DZ7</id>
    </interactant>
    <interactant intactId="EBI-718439">
        <id>O95159</id>
        <label>ZFPL1</label>
    </interactant>
    <organismsDiffer>false</organismsDiffer>
    <experiments>3</experiments>
</comment>
<comment type="subcellular location">
    <subcellularLocation>
        <location evidence="1">Lysosome membrane</location>
        <topology evidence="9">Multi-pass membrane protein</topology>
    </subcellularLocation>
    <subcellularLocation>
        <location evidence="1">Cytoplasm</location>
        <location evidence="1">Cytoskeleton</location>
    </subcellularLocation>
    <subcellularLocation>
        <location evidence="1">Cell projection</location>
        <location evidence="1">Filopodium</location>
    </subcellularLocation>
    <text evidence="1">In osteoclasts, localizes not only to the actin ring, but also to the filopodia, the stretched structures for searching cells to fuse, and the fusopod, the cytoplasmic bridge for contacting other osteoclasts to fuse.</text>
</comment>
<comment type="alternative products">
    <event type="alternative splicing"/>
    <isoform>
        <id>Q96DZ7-1</id>
        <name>1</name>
        <sequence type="displayed"/>
    </isoform>
    <isoform>
        <id>Q96DZ7-2</id>
        <name>2</name>
        <sequence type="described" ref="VSP_045895"/>
    </isoform>
</comment>
<comment type="tissue specificity">
    <text evidence="6">In adipose tissue, expressed by macrophages.</text>
</comment>
<comment type="induction">
    <text evidence="4">Up-regulated by bacterial lipopolysaccharide (LPS) in human umbilical vein endothelial cells (HUVECs).</text>
</comment>
<comment type="similarity">
    <text evidence="9">Belongs to the L6 tetraspanin family.</text>
</comment>
<protein>
    <recommendedName>
        <fullName>Transmembrane 4 L6 family member 19</fullName>
    </recommendedName>
    <alternativeName>
        <fullName>Osteoclast maturation-associated gene 4 protein</fullName>
    </alternativeName>
    <alternativeName>
        <fullName>Tetraspan membrane protein OCTM4</fullName>
    </alternativeName>
</protein>
<organism>
    <name type="scientific">Homo sapiens</name>
    <name type="common">Human</name>
    <dbReference type="NCBI Taxonomy" id="9606"/>
    <lineage>
        <taxon>Eukaryota</taxon>
        <taxon>Metazoa</taxon>
        <taxon>Chordata</taxon>
        <taxon>Craniata</taxon>
        <taxon>Vertebrata</taxon>
        <taxon>Euteleostomi</taxon>
        <taxon>Mammalia</taxon>
        <taxon>Eutheria</taxon>
        <taxon>Euarchontoglires</taxon>
        <taxon>Primates</taxon>
        <taxon>Haplorrhini</taxon>
        <taxon>Catarrhini</taxon>
        <taxon>Hominidae</taxon>
        <taxon>Homo</taxon>
    </lineage>
</organism>
<accession>Q96DZ7</accession>
<accession>B2RV20</accession>
<accession>E9PH22</accession>
<accession>Q336K7</accession>
<feature type="chain" id="PRO_0000219305" description="Transmembrane 4 L6 family member 19">
    <location>
        <begin position="1"/>
        <end position="209"/>
    </location>
</feature>
<feature type="topological domain" description="Cytoplasmic" evidence="2">
    <location>
        <begin position="1"/>
        <end position="16"/>
    </location>
</feature>
<feature type="transmembrane region" description="Helical" evidence="2">
    <location>
        <begin position="17"/>
        <end position="37"/>
    </location>
</feature>
<feature type="topological domain" description="Extracellular" evidence="2">
    <location>
        <begin position="38"/>
        <end position="59"/>
    </location>
</feature>
<feature type="transmembrane region" description="Helical" evidence="2">
    <location>
        <begin position="60"/>
        <end position="80"/>
    </location>
</feature>
<feature type="topological domain" description="Cytoplasmic" evidence="2">
    <location>
        <begin position="81"/>
        <end position="93"/>
    </location>
</feature>
<feature type="transmembrane region" description="Helical" evidence="2">
    <location>
        <begin position="94"/>
        <end position="114"/>
    </location>
</feature>
<feature type="topological domain" description="Extracellular" evidence="2">
    <location>
        <begin position="115"/>
        <end position="175"/>
    </location>
</feature>
<feature type="transmembrane region" description="Helical" evidence="2">
    <location>
        <begin position="176"/>
        <end position="196"/>
    </location>
</feature>
<feature type="topological domain" description="Cytoplasmic" evidence="2">
    <location>
        <begin position="197"/>
        <end position="209"/>
    </location>
</feature>
<feature type="region of interest" description="Important for homodimerization">
    <location>
        <begin position="186"/>
        <end position="196"/>
    </location>
</feature>
<feature type="glycosylation site" description="N-linked (GlcNAc...) asparagine" evidence="2">
    <location>
        <position position="133"/>
    </location>
</feature>
<feature type="splice variant" id="VSP_045895" description="In isoform 2." evidence="8">
    <location>
        <begin position="72"/>
        <end position="97"/>
    </location>
</feature>
<feature type="sequence variant" id="VAR_060546" description="In dbSNP:rs6785339." evidence="3 7">
    <original>Q</original>
    <variation>P</variation>
    <location>
        <position position="8"/>
    </location>
</feature>
<feature type="sequence variant" id="VAR_057280" description="In dbSNP:rs35643777.">
    <original>V</original>
    <variation>I</variation>
    <location>
        <position position="162"/>
    </location>
</feature>
<evidence type="ECO:0000250" key="1">
    <source>
        <dbReference type="UniProtKB" id="E9Q9H8"/>
    </source>
</evidence>
<evidence type="ECO:0000255" key="2"/>
<evidence type="ECO:0000269" key="3">
    <source>
    </source>
</evidence>
<evidence type="ECO:0000269" key="4">
    <source>
    </source>
</evidence>
<evidence type="ECO:0000269" key="5">
    <source>
    </source>
</evidence>
<evidence type="ECO:0000269" key="6">
    <source>
    </source>
</evidence>
<evidence type="ECO:0000269" key="7">
    <source ref="1"/>
</evidence>
<evidence type="ECO:0000303" key="8">
    <source>
    </source>
</evidence>
<evidence type="ECO:0000305" key="9"/>
<dbReference type="EMBL" id="AF192910">
    <property type="protein sequence ID" value="AAQ13824.1"/>
    <property type="molecule type" value="mRNA"/>
</dbReference>
<dbReference type="EMBL" id="AC069257">
    <property type="status" value="NOT_ANNOTATED_CDS"/>
    <property type="molecule type" value="Genomic_DNA"/>
</dbReference>
<dbReference type="EMBL" id="CH471191">
    <property type="protein sequence ID" value="EAW53661.1"/>
    <property type="molecule type" value="Genomic_DNA"/>
</dbReference>
<dbReference type="EMBL" id="BC146985">
    <property type="protein sequence ID" value="AAI46986.1"/>
    <property type="molecule type" value="mRNA"/>
</dbReference>
<dbReference type="EMBL" id="BC146993">
    <property type="protein sequence ID" value="AAI46994.1"/>
    <property type="molecule type" value="mRNA"/>
</dbReference>
<dbReference type="EMBL" id="BC147021">
    <property type="protein sequence ID" value="AAI47022.1"/>
    <property type="molecule type" value="mRNA"/>
</dbReference>
<dbReference type="EMBL" id="CA489370">
    <property type="status" value="NOT_ANNOTATED_CDS"/>
    <property type="molecule type" value="mRNA"/>
</dbReference>
<dbReference type="CCDS" id="CCDS3316.1">
    <molecule id="Q96DZ7-1"/>
</dbReference>
<dbReference type="CCDS" id="CCDS56299.1">
    <molecule id="Q96DZ7-2"/>
</dbReference>
<dbReference type="RefSeq" id="NP_001191827.1">
    <molecule id="Q96DZ7-2"/>
    <property type="nucleotide sequence ID" value="NM_001204898.2"/>
</dbReference>
<dbReference type="RefSeq" id="NP_612470.2">
    <molecule id="Q96DZ7-1"/>
    <property type="nucleotide sequence ID" value="NM_138461.4"/>
</dbReference>
<dbReference type="BioGRID" id="125488">
    <property type="interactions" value="39"/>
</dbReference>
<dbReference type="FunCoup" id="Q96DZ7">
    <property type="interactions" value="31"/>
</dbReference>
<dbReference type="IntAct" id="Q96DZ7">
    <property type="interactions" value="40"/>
</dbReference>
<dbReference type="STRING" id="9606.ENSP00000273695"/>
<dbReference type="TCDB" id="8.A.75.1.3">
    <property type="family name" value="the transmembrane 4 l6 (tm4l6) family"/>
</dbReference>
<dbReference type="GlyCosmos" id="Q96DZ7">
    <property type="glycosylation" value="1 site, No reported glycans"/>
</dbReference>
<dbReference type="GlyGen" id="Q96DZ7">
    <property type="glycosylation" value="1 site"/>
</dbReference>
<dbReference type="iPTMnet" id="Q96DZ7"/>
<dbReference type="PhosphoSitePlus" id="Q96DZ7"/>
<dbReference type="BioMuta" id="TM4SF19"/>
<dbReference type="DMDM" id="269849470"/>
<dbReference type="jPOST" id="Q96DZ7"/>
<dbReference type="MassIVE" id="Q96DZ7"/>
<dbReference type="PaxDb" id="9606-ENSP00000273695"/>
<dbReference type="PeptideAtlas" id="Q96DZ7"/>
<dbReference type="Antibodypedia" id="81508">
    <property type="antibodies" value="5 antibodies from 4 providers"/>
</dbReference>
<dbReference type="DNASU" id="116211"/>
<dbReference type="Ensembl" id="ENST00000273695.4">
    <molecule id="Q96DZ7-1"/>
    <property type="protein sequence ID" value="ENSP00000273695.4"/>
    <property type="gene ID" value="ENSG00000145107.16"/>
</dbReference>
<dbReference type="Ensembl" id="ENST00000454715.5">
    <molecule id="Q96DZ7-2"/>
    <property type="protein sequence ID" value="ENSP00000387728.1"/>
    <property type="gene ID" value="ENSG00000145107.16"/>
</dbReference>
<dbReference type="GeneID" id="116211"/>
<dbReference type="KEGG" id="hsa:116211"/>
<dbReference type="MANE-Select" id="ENST00000273695.4">
    <property type="protein sequence ID" value="ENSP00000273695.4"/>
    <property type="RefSeq nucleotide sequence ID" value="NM_138461.4"/>
    <property type="RefSeq protein sequence ID" value="NP_612470.2"/>
</dbReference>
<dbReference type="UCSC" id="uc003fwl.3">
    <molecule id="Q96DZ7-1"/>
    <property type="organism name" value="human"/>
</dbReference>
<dbReference type="AGR" id="HGNC:25167"/>
<dbReference type="CTD" id="116211"/>
<dbReference type="DisGeNET" id="116211"/>
<dbReference type="GeneCards" id="TM4SF19"/>
<dbReference type="HGNC" id="HGNC:25167">
    <property type="gene designation" value="TM4SF19"/>
</dbReference>
<dbReference type="HPA" id="ENSG00000145107">
    <property type="expression patterns" value="Tissue enhanced (adipose tissue, testis)"/>
</dbReference>
<dbReference type="MIM" id="620845">
    <property type="type" value="gene"/>
</dbReference>
<dbReference type="neXtProt" id="NX_Q96DZ7"/>
<dbReference type="OpenTargets" id="ENSG00000145107"/>
<dbReference type="PharmGKB" id="PA142670802"/>
<dbReference type="VEuPathDB" id="HostDB:ENSG00000145107"/>
<dbReference type="eggNOG" id="ENOG502S1UJ">
    <property type="taxonomic scope" value="Eukaryota"/>
</dbReference>
<dbReference type="GeneTree" id="ENSGT01030000234590"/>
<dbReference type="HOGENOM" id="CLU_087168_0_0_1"/>
<dbReference type="InParanoid" id="Q96DZ7"/>
<dbReference type="OMA" id="RWASACV"/>
<dbReference type="OrthoDB" id="9897613at2759"/>
<dbReference type="PAN-GO" id="Q96DZ7">
    <property type="GO annotations" value="1 GO annotation based on evolutionary models"/>
</dbReference>
<dbReference type="PhylomeDB" id="Q96DZ7"/>
<dbReference type="TreeFam" id="TF331371"/>
<dbReference type="PathwayCommons" id="Q96DZ7"/>
<dbReference type="SignaLink" id="Q96DZ7"/>
<dbReference type="BioGRID-ORCS" id="116211">
    <property type="hits" value="9 hits in 1142 CRISPR screens"/>
</dbReference>
<dbReference type="GenomeRNAi" id="116211"/>
<dbReference type="Pharos" id="Q96DZ7">
    <property type="development level" value="Tdark"/>
</dbReference>
<dbReference type="PRO" id="PR:Q96DZ7"/>
<dbReference type="Proteomes" id="UP000005640">
    <property type="component" value="Chromosome 3"/>
</dbReference>
<dbReference type="RNAct" id="Q96DZ7">
    <property type="molecule type" value="protein"/>
</dbReference>
<dbReference type="Bgee" id="ENSG00000145107">
    <property type="expression patterns" value="Expressed in male germ line stem cell (sensu Vertebrata) in testis and 90 other cell types or tissues"/>
</dbReference>
<dbReference type="ExpressionAtlas" id="Q96DZ7">
    <property type="expression patterns" value="baseline and differential"/>
</dbReference>
<dbReference type="GO" id="GO:0015629">
    <property type="term" value="C:actin cytoskeleton"/>
    <property type="evidence" value="ECO:0000250"/>
    <property type="project" value="UniProtKB"/>
</dbReference>
<dbReference type="GO" id="GO:0030175">
    <property type="term" value="C:filopodium"/>
    <property type="evidence" value="ECO:0000250"/>
    <property type="project" value="UniProtKB"/>
</dbReference>
<dbReference type="GO" id="GO:0005765">
    <property type="term" value="C:lysosomal membrane"/>
    <property type="evidence" value="ECO:0007669"/>
    <property type="project" value="UniProtKB-SubCell"/>
</dbReference>
<dbReference type="GO" id="GO:0016020">
    <property type="term" value="C:membrane"/>
    <property type="evidence" value="ECO:0000318"/>
    <property type="project" value="GO_Central"/>
</dbReference>
<dbReference type="GO" id="GO:0042803">
    <property type="term" value="F:protein homodimerization activity"/>
    <property type="evidence" value="ECO:0000250"/>
    <property type="project" value="UniProtKB"/>
</dbReference>
<dbReference type="GO" id="GO:0045672">
    <property type="term" value="P:positive regulation of osteoclast differentiation"/>
    <property type="evidence" value="ECO:0000315"/>
    <property type="project" value="UniProtKB"/>
</dbReference>
<dbReference type="InterPro" id="IPR008661">
    <property type="entry name" value="L6_membrane"/>
</dbReference>
<dbReference type="PANTHER" id="PTHR14198">
    <property type="entry name" value="TRANSMEMBRANE 4 L6 FAMILY MEMBER 1-RELATED"/>
    <property type="match status" value="1"/>
</dbReference>
<dbReference type="PANTHER" id="PTHR14198:SF22">
    <property type="entry name" value="TRANSMEMBRANE 4 L6 FAMILY MEMBER 19"/>
    <property type="match status" value="1"/>
</dbReference>
<dbReference type="Pfam" id="PF05805">
    <property type="entry name" value="L6_membrane"/>
    <property type="match status" value="1"/>
</dbReference>